<feature type="chain" id="PRO_0000098114" description="HTH-type transcriptional regulator CueR">
    <location>
        <begin position="1"/>
        <end position="138"/>
    </location>
</feature>
<feature type="domain" description="HTH merR-type" evidence="2">
    <location>
        <begin position="1"/>
        <end position="69"/>
    </location>
</feature>
<feature type="DNA-binding region" description="H-T-H motif" evidence="2">
    <location>
        <begin position="4"/>
        <end position="23"/>
    </location>
</feature>
<feature type="binding site" evidence="1">
    <location>
        <position position="112"/>
    </location>
    <ligand>
        <name>Cu(+)</name>
        <dbReference type="ChEBI" id="CHEBI:49552"/>
    </ligand>
</feature>
<feature type="binding site" evidence="1">
    <location>
        <position position="120"/>
    </location>
    <ligand>
        <name>Cu(+)</name>
        <dbReference type="ChEBI" id="CHEBI:49552"/>
    </ligand>
</feature>
<proteinExistence type="inferred from homology"/>
<comment type="function">
    <text evidence="1">Regulates the transcription of the copA and cueO genes. It detects cytoplasmic copper stress and activates transcription in response to increasing copper concentrations (By similarity).</text>
</comment>
<comment type="subunit">
    <text evidence="1">Homodimer.</text>
</comment>
<comment type="subcellular location">
    <subcellularLocation>
        <location evidence="3">Cytoplasm</location>
    </subcellularLocation>
</comment>
<comment type="domain">
    <text evidence="1">It contains a N-terminal DNA binding region and a C-terminal metal binding region.</text>
</comment>
<name>CUER_SALTI</name>
<organism>
    <name type="scientific">Salmonella typhi</name>
    <dbReference type="NCBI Taxonomy" id="90370"/>
    <lineage>
        <taxon>Bacteria</taxon>
        <taxon>Pseudomonadati</taxon>
        <taxon>Pseudomonadota</taxon>
        <taxon>Gammaproteobacteria</taxon>
        <taxon>Enterobacterales</taxon>
        <taxon>Enterobacteriaceae</taxon>
        <taxon>Salmonella</taxon>
    </lineage>
</organism>
<reference key="1">
    <citation type="journal article" date="2001" name="Nature">
        <title>Complete genome sequence of a multiple drug resistant Salmonella enterica serovar Typhi CT18.</title>
        <authorList>
            <person name="Parkhill J."/>
            <person name="Dougan G."/>
            <person name="James K.D."/>
            <person name="Thomson N.R."/>
            <person name="Pickard D."/>
            <person name="Wain J."/>
            <person name="Churcher C.M."/>
            <person name="Mungall K.L."/>
            <person name="Bentley S.D."/>
            <person name="Holden M.T.G."/>
            <person name="Sebaihia M."/>
            <person name="Baker S."/>
            <person name="Basham D."/>
            <person name="Brooks K."/>
            <person name="Chillingworth T."/>
            <person name="Connerton P."/>
            <person name="Cronin A."/>
            <person name="Davis P."/>
            <person name="Davies R.M."/>
            <person name="Dowd L."/>
            <person name="White N."/>
            <person name="Farrar J."/>
            <person name="Feltwell T."/>
            <person name="Hamlin N."/>
            <person name="Haque A."/>
            <person name="Hien T.T."/>
            <person name="Holroyd S."/>
            <person name="Jagels K."/>
            <person name="Krogh A."/>
            <person name="Larsen T.S."/>
            <person name="Leather S."/>
            <person name="Moule S."/>
            <person name="O'Gaora P."/>
            <person name="Parry C."/>
            <person name="Quail M.A."/>
            <person name="Rutherford K.M."/>
            <person name="Simmonds M."/>
            <person name="Skelton J."/>
            <person name="Stevens K."/>
            <person name="Whitehead S."/>
            <person name="Barrell B.G."/>
        </authorList>
    </citation>
    <scope>NUCLEOTIDE SEQUENCE [LARGE SCALE GENOMIC DNA]</scope>
    <source>
        <strain>CT18</strain>
    </source>
</reference>
<reference key="2">
    <citation type="journal article" date="2003" name="J. Bacteriol.">
        <title>Comparative genomics of Salmonella enterica serovar Typhi strains Ty2 and CT18.</title>
        <authorList>
            <person name="Deng W."/>
            <person name="Liou S.-R."/>
            <person name="Plunkett G. III"/>
            <person name="Mayhew G.F."/>
            <person name="Rose D.J."/>
            <person name="Burland V."/>
            <person name="Kodoyianni V."/>
            <person name="Schwartz D.C."/>
            <person name="Blattner F.R."/>
        </authorList>
    </citation>
    <scope>NUCLEOTIDE SEQUENCE [LARGE SCALE GENOMIC DNA]</scope>
    <source>
        <strain>ATCC 700931 / Ty2</strain>
    </source>
</reference>
<evidence type="ECO:0000250" key="1"/>
<evidence type="ECO:0000255" key="2">
    <source>
        <dbReference type="PROSITE-ProRule" id="PRU00254"/>
    </source>
</evidence>
<evidence type="ECO:0000305" key="3"/>
<accession>Q8Z8S3</accession>
<sequence>MNISDVAKKTGLTSKAIRFYEEKGLVTPPLRSENGYRTYTQKHLNELTLLRQARQVGFNLEECGELVNLFNDPRRHSADVKKRTLEKVAEIERHISELQSMRDQLLAMAESCPGDDSADCPIIDNLSGCCHHKAQKLR</sequence>
<gene>
    <name type="primary">cueR</name>
    <name type="ordered locus">STY0545</name>
    <name type="ordered locus">t2361</name>
</gene>
<dbReference type="EMBL" id="AL513382">
    <property type="protein sequence ID" value="CAD04984.1"/>
    <property type="molecule type" value="Genomic_DNA"/>
</dbReference>
<dbReference type="EMBL" id="AE014613">
    <property type="protein sequence ID" value="AAO69953.1"/>
    <property type="molecule type" value="Genomic_DNA"/>
</dbReference>
<dbReference type="RefSeq" id="NP_455094.1">
    <property type="nucleotide sequence ID" value="NC_003198.1"/>
</dbReference>
<dbReference type="RefSeq" id="WP_001026762.1">
    <property type="nucleotide sequence ID" value="NZ_WSUR01000008.1"/>
</dbReference>
<dbReference type="SMR" id="Q8Z8S3"/>
<dbReference type="STRING" id="220341.gene:17584564"/>
<dbReference type="KEGG" id="stt:t2361"/>
<dbReference type="KEGG" id="sty:STY0545"/>
<dbReference type="PATRIC" id="fig|220341.7.peg.548"/>
<dbReference type="eggNOG" id="COG0789">
    <property type="taxonomic scope" value="Bacteria"/>
</dbReference>
<dbReference type="HOGENOM" id="CLU_060077_2_0_6"/>
<dbReference type="OMA" id="DAGSECC"/>
<dbReference type="OrthoDB" id="9808480at2"/>
<dbReference type="Proteomes" id="UP000000541">
    <property type="component" value="Chromosome"/>
</dbReference>
<dbReference type="Proteomes" id="UP000002670">
    <property type="component" value="Chromosome"/>
</dbReference>
<dbReference type="GO" id="GO:0005737">
    <property type="term" value="C:cytoplasm"/>
    <property type="evidence" value="ECO:0007669"/>
    <property type="project" value="UniProtKB-SubCell"/>
</dbReference>
<dbReference type="GO" id="GO:0005507">
    <property type="term" value="F:copper ion binding"/>
    <property type="evidence" value="ECO:0007669"/>
    <property type="project" value="InterPro"/>
</dbReference>
<dbReference type="GO" id="GO:0003677">
    <property type="term" value="F:DNA binding"/>
    <property type="evidence" value="ECO:0007669"/>
    <property type="project" value="UniProtKB-KW"/>
</dbReference>
<dbReference type="GO" id="GO:0003700">
    <property type="term" value="F:DNA-binding transcription factor activity"/>
    <property type="evidence" value="ECO:0007669"/>
    <property type="project" value="InterPro"/>
</dbReference>
<dbReference type="GO" id="GO:0045893">
    <property type="term" value="P:positive regulation of DNA-templated transcription"/>
    <property type="evidence" value="ECO:0007669"/>
    <property type="project" value="InterPro"/>
</dbReference>
<dbReference type="CDD" id="cd01108">
    <property type="entry name" value="HTH_CueR"/>
    <property type="match status" value="1"/>
</dbReference>
<dbReference type="FunFam" id="1.10.1660.10:FF:000001">
    <property type="entry name" value="Cu(I)-responsive transcriptional regulator"/>
    <property type="match status" value="1"/>
</dbReference>
<dbReference type="Gene3D" id="1.10.1660.10">
    <property type="match status" value="1"/>
</dbReference>
<dbReference type="InterPro" id="IPR011789">
    <property type="entry name" value="CueR"/>
</dbReference>
<dbReference type="InterPro" id="IPR009061">
    <property type="entry name" value="DNA-bd_dom_put_sf"/>
</dbReference>
<dbReference type="InterPro" id="IPR000551">
    <property type="entry name" value="MerR-type_HTH_dom"/>
</dbReference>
<dbReference type="InterPro" id="IPR047057">
    <property type="entry name" value="MerR_fam"/>
</dbReference>
<dbReference type="NCBIfam" id="TIGR02044">
    <property type="entry name" value="CueR"/>
    <property type="match status" value="1"/>
</dbReference>
<dbReference type="NCBIfam" id="NF007590">
    <property type="entry name" value="PRK10227.1"/>
    <property type="match status" value="1"/>
</dbReference>
<dbReference type="PANTHER" id="PTHR30204:SF16">
    <property type="entry name" value="HTH-TYPE TRANSCRIPTIONAL REGULATOR CUER"/>
    <property type="match status" value="1"/>
</dbReference>
<dbReference type="PANTHER" id="PTHR30204">
    <property type="entry name" value="REDOX-CYCLING DRUG-SENSING TRANSCRIPTIONAL ACTIVATOR SOXR"/>
    <property type="match status" value="1"/>
</dbReference>
<dbReference type="Pfam" id="PF13411">
    <property type="entry name" value="MerR_1"/>
    <property type="match status" value="1"/>
</dbReference>
<dbReference type="PRINTS" id="PR00040">
    <property type="entry name" value="HTHMERR"/>
</dbReference>
<dbReference type="SMART" id="SM00422">
    <property type="entry name" value="HTH_MERR"/>
    <property type="match status" value="1"/>
</dbReference>
<dbReference type="SUPFAM" id="SSF46955">
    <property type="entry name" value="Putative DNA-binding domain"/>
    <property type="match status" value="1"/>
</dbReference>
<dbReference type="PROSITE" id="PS00552">
    <property type="entry name" value="HTH_MERR_1"/>
    <property type="match status" value="1"/>
</dbReference>
<dbReference type="PROSITE" id="PS50937">
    <property type="entry name" value="HTH_MERR_2"/>
    <property type="match status" value="1"/>
</dbReference>
<keyword id="KW-0010">Activator</keyword>
<keyword id="KW-0186">Copper</keyword>
<keyword id="KW-0963">Cytoplasm</keyword>
<keyword id="KW-0238">DNA-binding</keyword>
<keyword id="KW-0479">Metal-binding</keyword>
<keyword id="KW-0804">Transcription</keyword>
<keyword id="KW-0805">Transcription regulation</keyword>
<protein>
    <recommendedName>
        <fullName>HTH-type transcriptional regulator CueR</fullName>
    </recommendedName>
    <alternativeName>
        <fullName>Copper efflux regulator</fullName>
    </alternativeName>
    <alternativeName>
        <fullName>Copper export regulator</fullName>
    </alternativeName>
</protein>